<keyword id="KW-0067">ATP-binding</keyword>
<keyword id="KW-0963">Cytoplasm</keyword>
<keyword id="KW-0238">DNA-binding</keyword>
<keyword id="KW-0413">Isomerase</keyword>
<keyword id="KW-0547">Nucleotide-binding</keyword>
<keyword id="KW-0799">Topoisomerase</keyword>
<protein>
    <recommendedName>
        <fullName>DNA gyrase subunit B</fullName>
        <ecNumber evidence="2">5.6.2.2</ecNumber>
    </recommendedName>
</protein>
<sequence>DNSYKVSGGLHGVGVSVVNALSSKLQLTIHRAGQEHQQEYHHGDPQYPLRVIGETDRTGTIVRFWPSAETFSQTIFNVDILARRLRELSFLNAGVRIVLRDERVNLENVYDYEGGLSEFVRYINEGKTHLNEIFHFTTDADNGISVEVALQWNDSYQENVRCFTNNIPQKDGGTHLAGFRAALTRGLNSYMENENLLKKEKVVVSGDDAREGLTAIISVKVPDPKFSSQTKEKLVSSEVKPAVEQAMNKEFSAYLLENPQAAKSIAGKIIDAARARDAARKAREMTRRKSALDIAGLPGKLADCQEKDPALSELYLVEGDSAGGSAKQGRNRKMQAILPLKGKILNVERARFDKMISSQEVGTLITALGCGIGREEYNPDKLRYHKII</sequence>
<gene>
    <name type="primary">gyrB</name>
</gene>
<organism>
    <name type="scientific">Acinetobacter haemolyticus</name>
    <dbReference type="NCBI Taxonomy" id="29430"/>
    <lineage>
        <taxon>Bacteria</taxon>
        <taxon>Pseudomonadati</taxon>
        <taxon>Pseudomonadota</taxon>
        <taxon>Gammaproteobacteria</taxon>
        <taxon>Moraxellales</taxon>
        <taxon>Moraxellaceae</taxon>
        <taxon>Acinetobacter</taxon>
    </lineage>
</organism>
<accession>Q44065</accession>
<accession>Q59120</accession>
<accession>Q9ZA03</accession>
<proteinExistence type="inferred from homology"/>
<name>GYRB_ACIHA</name>
<evidence type="ECO:0000250" key="1">
    <source>
        <dbReference type="UniProtKB" id="P0AES6"/>
    </source>
</evidence>
<evidence type="ECO:0000255" key="2">
    <source>
        <dbReference type="PROSITE-ProRule" id="PRU00995"/>
    </source>
</evidence>
<evidence type="ECO:0000305" key="3"/>
<dbReference type="EC" id="5.6.2.2" evidence="2"/>
<dbReference type="EMBL" id="AB008691">
    <property type="protein sequence ID" value="BAA75408.1"/>
    <property type="molecule type" value="Genomic_DNA"/>
</dbReference>
<dbReference type="EMBL" id="AB008724">
    <property type="protein sequence ID" value="BAA75441.1"/>
    <property type="molecule type" value="Genomic_DNA"/>
</dbReference>
<dbReference type="EMBL" id="D73430">
    <property type="protein sequence ID" value="BAA11155.1"/>
    <property type="molecule type" value="Genomic_DNA"/>
</dbReference>
<dbReference type="EMBL" id="D73415">
    <property type="protein sequence ID" value="BAA11140.1"/>
    <property type="molecule type" value="Genomic_DNA"/>
</dbReference>
<dbReference type="PIR" id="T43904">
    <property type="entry name" value="T43904"/>
</dbReference>
<dbReference type="SMR" id="Q44065"/>
<dbReference type="STRING" id="29430.AHTJS_00020"/>
<dbReference type="eggNOG" id="COG0187">
    <property type="taxonomic scope" value="Bacteria"/>
</dbReference>
<dbReference type="GO" id="GO:0005737">
    <property type="term" value="C:cytoplasm"/>
    <property type="evidence" value="ECO:0007669"/>
    <property type="project" value="UniProtKB-SubCell"/>
</dbReference>
<dbReference type="GO" id="GO:0005524">
    <property type="term" value="F:ATP binding"/>
    <property type="evidence" value="ECO:0007669"/>
    <property type="project" value="UniProtKB-KW"/>
</dbReference>
<dbReference type="GO" id="GO:0003677">
    <property type="term" value="F:DNA binding"/>
    <property type="evidence" value="ECO:0007669"/>
    <property type="project" value="UniProtKB-KW"/>
</dbReference>
<dbReference type="GO" id="GO:0003918">
    <property type="term" value="F:DNA topoisomerase type II (double strand cut, ATP-hydrolyzing) activity"/>
    <property type="evidence" value="ECO:0007669"/>
    <property type="project" value="UniProtKB-EC"/>
</dbReference>
<dbReference type="GO" id="GO:0006265">
    <property type="term" value="P:DNA topological change"/>
    <property type="evidence" value="ECO:0007669"/>
    <property type="project" value="InterPro"/>
</dbReference>
<dbReference type="CDD" id="cd00822">
    <property type="entry name" value="TopoII_Trans_DNA_gyrase"/>
    <property type="match status" value="1"/>
</dbReference>
<dbReference type="FunFam" id="3.30.230.10:FF:000005">
    <property type="entry name" value="DNA gyrase subunit B"/>
    <property type="match status" value="1"/>
</dbReference>
<dbReference type="Gene3D" id="3.30.230.10">
    <property type="match status" value="1"/>
</dbReference>
<dbReference type="Gene3D" id="3.40.50.670">
    <property type="match status" value="1"/>
</dbReference>
<dbReference type="Gene3D" id="3.30.565.10">
    <property type="entry name" value="Histidine kinase-like ATPase, C-terminal domain"/>
    <property type="match status" value="1"/>
</dbReference>
<dbReference type="InterPro" id="IPR036890">
    <property type="entry name" value="HATPase_C_sf"/>
</dbReference>
<dbReference type="InterPro" id="IPR020568">
    <property type="entry name" value="Ribosomal_Su5_D2-typ_SF"/>
</dbReference>
<dbReference type="InterPro" id="IPR014721">
    <property type="entry name" value="Ribsml_uS5_D2-typ_fold_subgr"/>
</dbReference>
<dbReference type="InterPro" id="IPR001241">
    <property type="entry name" value="Topo_IIA"/>
</dbReference>
<dbReference type="InterPro" id="IPR013760">
    <property type="entry name" value="Topo_IIA-like_dom_sf"/>
</dbReference>
<dbReference type="InterPro" id="IPR000565">
    <property type="entry name" value="Topo_IIA_B"/>
</dbReference>
<dbReference type="InterPro" id="IPR013759">
    <property type="entry name" value="Topo_IIA_B_C"/>
</dbReference>
<dbReference type="InterPro" id="IPR013506">
    <property type="entry name" value="Topo_IIA_bsu_dom2"/>
</dbReference>
<dbReference type="InterPro" id="IPR018522">
    <property type="entry name" value="TopoIIA_CS"/>
</dbReference>
<dbReference type="InterPro" id="IPR006171">
    <property type="entry name" value="TOPRIM_dom"/>
</dbReference>
<dbReference type="PANTHER" id="PTHR45866:SF1">
    <property type="entry name" value="DNA GYRASE SUBUNIT B, MITOCHONDRIAL"/>
    <property type="match status" value="1"/>
</dbReference>
<dbReference type="PANTHER" id="PTHR45866">
    <property type="entry name" value="DNA GYRASE/TOPOISOMERASE SUBUNIT B"/>
    <property type="match status" value="1"/>
</dbReference>
<dbReference type="Pfam" id="PF00204">
    <property type="entry name" value="DNA_gyraseB"/>
    <property type="match status" value="1"/>
</dbReference>
<dbReference type="Pfam" id="PF01751">
    <property type="entry name" value="Toprim"/>
    <property type="match status" value="1"/>
</dbReference>
<dbReference type="PRINTS" id="PR01159">
    <property type="entry name" value="DNAGYRASEB"/>
</dbReference>
<dbReference type="PRINTS" id="PR00418">
    <property type="entry name" value="TPI2FAMILY"/>
</dbReference>
<dbReference type="SMART" id="SM00433">
    <property type="entry name" value="TOP2c"/>
    <property type="match status" value="1"/>
</dbReference>
<dbReference type="SUPFAM" id="SSF55874">
    <property type="entry name" value="ATPase domain of HSP90 chaperone/DNA topoisomerase II/histidine kinase"/>
    <property type="match status" value="1"/>
</dbReference>
<dbReference type="SUPFAM" id="SSF54211">
    <property type="entry name" value="Ribosomal protein S5 domain 2-like"/>
    <property type="match status" value="1"/>
</dbReference>
<dbReference type="SUPFAM" id="SSF56719">
    <property type="entry name" value="Type II DNA topoisomerase"/>
    <property type="match status" value="1"/>
</dbReference>
<dbReference type="PROSITE" id="PS00177">
    <property type="entry name" value="TOPOISOMERASE_II"/>
    <property type="match status" value="1"/>
</dbReference>
<dbReference type="PROSITE" id="PS50880">
    <property type="entry name" value="TOPRIM"/>
    <property type="match status" value="1"/>
</dbReference>
<feature type="chain" id="PRO_0000145276" description="DNA gyrase subunit B">
    <location>
        <begin position="1" status="less than"/>
        <end position="388" status="greater than"/>
    </location>
</feature>
<feature type="domain" description="Toprim" evidence="2">
    <location>
        <begin position="312"/>
        <end position="388" status="greater than"/>
    </location>
</feature>
<feature type="site" description="Interaction with DNA" evidence="2">
    <location>
        <position position="343"/>
    </location>
</feature>
<feature type="site" description="Interaction with DNA" evidence="2">
    <location>
        <position position="346"/>
    </location>
</feature>
<feature type="sequence conflict" description="In Ref. 2; BAA11155." evidence="3" ref="2">
    <original>G</original>
    <variation>R</variation>
    <location>
        <position position="12"/>
    </location>
</feature>
<feature type="non-terminal residue">
    <location>
        <position position="1"/>
    </location>
</feature>
<feature type="non-terminal residue">
    <location>
        <position position="388"/>
    </location>
</feature>
<comment type="function">
    <text evidence="1">A type II topoisomerase that negatively supercoils closed circular double-stranded (ds) DNA in an ATP-dependent manner to modulate DNA topology and maintain chromosomes in an underwound state. Negative supercoiling favors strand separation, and DNA replication, transcription, recombination and repair, all of which involve strand separation. Also able to catalyze the interconversion of other topological isomers of dsDNA rings, including catenanes and knotted rings. Type II topoisomerases break and join 2 DNA strands simultaneously in an ATP-dependent manner.</text>
</comment>
<comment type="catalytic activity">
    <reaction evidence="2">
        <text>ATP-dependent breakage, passage and rejoining of double-stranded DNA.</text>
        <dbReference type="EC" id="5.6.2.2"/>
    </reaction>
</comment>
<comment type="subunit">
    <text evidence="1">Heterotetramer, composed of two GyrA and two GyrB chains. In the heterotetramer, GyrA contains the active site tyrosine that forms a transient covalent intermediate with DNA, while GyrB binds cofactors and catalyzes ATP hydrolysis.</text>
</comment>
<comment type="subcellular location">
    <subcellularLocation>
        <location evidence="1">Cytoplasm</location>
    </subcellularLocation>
</comment>
<comment type="miscellaneous">
    <text evidence="1">Few gyrases are as efficient as E.coli at forming negative supercoils. Not all organisms have 2 type II topoisomerases; in organisms with a single type II topoisomerase this enzyme also has to decatenate newly replicated chromosomes.</text>
</comment>
<comment type="similarity">
    <text evidence="3">Belongs to the type II topoisomerase GyrB family.</text>
</comment>
<reference key="1">
    <citation type="journal article" date="1999" name="Int. J. Syst. Bacteriol.">
        <title>Phylogenetic structures of the genus Acinetobacter based on gyrB sequences: comparison with the grouping by DNA-DNA hybridization.</title>
        <authorList>
            <person name="Yamamoto S."/>
            <person name="Bouvet P.J.M."/>
            <person name="Harayama S."/>
        </authorList>
    </citation>
    <scope>NUCLEOTIDE SEQUENCE [GENOMIC DNA]</scope>
    <source>
        <strain>ATCC 17906 / DSM 6962 / CCUG 888 / CIP 64.3 / KCTC 12404 / NCTC 10305 / B40</strain>
        <strain>ATCC 17907 / NCTC 10306 / CIP 64.4 / B44</strain>
    </source>
</reference>
<reference key="2">
    <citation type="journal article" date="1996" name="Int. J. Syst. Bacteriol.">
        <title>Phylogenetic analysis of Acinetobacter strains based on the nucleotide sequences of gyrB genes and on the amino acid sequences of their products.</title>
        <authorList>
            <person name="Yamamoto S."/>
            <person name="Harayama S."/>
        </authorList>
    </citation>
    <scope>NUCLEOTIDE SEQUENCE [GENOMIC DNA] OF 3-118 AND 289-388</scope>
    <source>
        <strain>ATCC 17906 / DSM 6962 / CCUG 888 / CIP 64.3 / KCTC 12404 / NCTC 10305 / B40</strain>
    </source>
</reference>